<gene>
    <name evidence="1" type="primary">prpB</name>
    <name type="synonym">yahQ</name>
    <name type="ordered locus">b0331</name>
    <name type="ordered locus">JW0323</name>
</gene>
<protein>
    <recommendedName>
        <fullName evidence="6">2-methylisocitrate lyase</fullName>
        <shortName evidence="7">2-MIC</shortName>
        <shortName evidence="7">MICL</shortName>
        <ecNumber evidence="2 4">4.1.3.30</ecNumber>
    </recommendedName>
    <alternativeName>
        <fullName evidence="6">(2R,3S)-2-methylisocitrate lyase</fullName>
    </alternativeName>
</protein>
<comment type="function">
    <text evidence="1 2 4">Involved in the catabolism of short chain fatty acids (SCFA) via the 2-methylcitrate cycle I (propionate degradation route). Catalyzes the thermodynamically favored C-C bond cleavage of (2R,3S)-2-methylisocitrate to yield pyruvate and succinate via an alpha-carboxy-carbanion intermediate.</text>
</comment>
<comment type="catalytic activity">
    <reaction evidence="1 2 4">
        <text>(2S,3R)-3-hydroxybutane-1,2,3-tricarboxylate = pyruvate + succinate</text>
        <dbReference type="Rhea" id="RHEA:16809"/>
        <dbReference type="ChEBI" id="CHEBI:15361"/>
        <dbReference type="ChEBI" id="CHEBI:30031"/>
        <dbReference type="ChEBI" id="CHEBI:57429"/>
        <dbReference type="EC" id="4.1.3.30"/>
    </reaction>
</comment>
<comment type="cofactor">
    <cofactor evidence="1 2 3 4">
        <name>Mg(2+)</name>
        <dbReference type="ChEBI" id="CHEBI:18420"/>
    </cofactor>
</comment>
<comment type="biophysicochemical properties">
    <kinetics>
        <KM evidence="2 4">35 uM for magnesium</KM>
        <KM evidence="2 4">19 uM for threo-2-methylisocitrate (a mixture of (2R,3S)- and (2S,3R)-2-methylisocitrate in presence of 2 mM magnesium at pH 7 and 30 degrees Celsius)</KM>
        <text evidence="4">kcat is 12 sec(-1) for methylisocitrate lyase with threo-2-methylisocitrate as substrate (mixture of (2R,3S)- and (2S,3R)-2-methylisocitrate at pH 7 and 30 degrees Celsius).</text>
    </kinetics>
</comment>
<comment type="pathway">
    <text evidence="1 9">Organic acid metabolism; propanoate degradation.</text>
</comment>
<comment type="subunit">
    <text evidence="1 3 4">Homotetramer; dimer of dimers.</text>
</comment>
<comment type="similarity">
    <text evidence="1 8">Belongs to the isocitrate lyase/PEP mutase superfamily. Methylisocitrate lyase family.</text>
</comment>
<sequence length="296" mass="32135">MSLHSPGKAFRAALTKENPLQIVGTINANHALLAQRAGYQAIYLSGGGVAAGSLGLPDLGISTLDDVLTDIRRITDVCSLPLLVDADIGFGSSAFNVARTVKSMIKAGAAGLHIEDQVGAKRCGHRPNKAIVSKEEMVDRIRAAVDAKTDPDFVIMARTDALAVEGLDAAIERAQAYVEAGAEMLFPEAITELAMYRQFADAVQVPILANITEFGATPLFTTDELRSAHVAMALYPLSAFRAMNRAAEHVYNVLRQEGTQKSVIDTMQTRNELYESINYYQYEEKLDNLFARSQVK</sequence>
<evidence type="ECO:0000255" key="1">
    <source>
        <dbReference type="HAMAP-Rule" id="MF_01939"/>
    </source>
</evidence>
<evidence type="ECO:0000269" key="2">
    <source>
    </source>
</evidence>
<evidence type="ECO:0000269" key="3">
    <source>
    </source>
</evidence>
<evidence type="ECO:0000269" key="4">
    <source>
    </source>
</evidence>
<evidence type="ECO:0000269" key="5">
    <source>
    </source>
</evidence>
<evidence type="ECO:0000303" key="6">
    <source>
    </source>
</evidence>
<evidence type="ECO:0000303" key="7">
    <source>
    </source>
</evidence>
<evidence type="ECO:0000305" key="8"/>
<evidence type="ECO:0000305" key="9">
    <source>
    </source>
</evidence>
<evidence type="ECO:0007829" key="10">
    <source>
        <dbReference type="PDB" id="1XG3"/>
    </source>
</evidence>
<evidence type="ECO:0007829" key="11">
    <source>
        <dbReference type="PDB" id="1XG4"/>
    </source>
</evidence>
<feature type="initiator methionine" description="Removed" evidence="4 5">
    <location>
        <position position="1"/>
    </location>
</feature>
<feature type="chain" id="PRO_0000068815" description="2-methylisocitrate lyase">
    <location>
        <begin position="2"/>
        <end position="296"/>
    </location>
</feature>
<feature type="binding site" evidence="1 4">
    <location>
        <begin position="45"/>
        <end position="47"/>
    </location>
    <ligand>
        <name>substrate</name>
    </ligand>
</feature>
<feature type="binding site" evidence="1 3 4">
    <location>
        <position position="85"/>
    </location>
    <ligand>
        <name>Mg(2+)</name>
        <dbReference type="ChEBI" id="CHEBI:18420"/>
    </ligand>
</feature>
<feature type="binding site" evidence="1 3 4">
    <location>
        <position position="87"/>
    </location>
    <ligand>
        <name>Mg(2+)</name>
        <dbReference type="ChEBI" id="CHEBI:18420"/>
    </ligand>
</feature>
<feature type="binding site" evidence="1 4">
    <location>
        <begin position="123"/>
        <end position="124"/>
    </location>
    <ligand>
        <name>substrate</name>
    </ligand>
</feature>
<feature type="binding site" evidence="1 4">
    <location>
        <position position="158"/>
    </location>
    <ligand>
        <name>substrate</name>
    </ligand>
</feature>
<feature type="binding site" evidence="1 4">
    <location>
        <position position="188"/>
    </location>
    <ligand>
        <name>substrate</name>
    </ligand>
</feature>
<feature type="binding site" evidence="1 4">
    <location>
        <begin position="210"/>
        <end position="212"/>
    </location>
    <ligand>
        <name>substrate</name>
    </ligand>
</feature>
<feature type="binding site" evidence="1 4">
    <location>
        <position position="241"/>
    </location>
    <ligand>
        <name>substrate</name>
    </ligand>
</feature>
<feature type="binding site" evidence="1 4">
    <location>
        <position position="270"/>
    </location>
    <ligand>
        <name>substrate</name>
    </ligand>
</feature>
<feature type="mutagenesis site" description="Inactive." evidence="4">
    <original>C</original>
    <variation>S</variation>
    <location>
        <position position="123"/>
    </location>
</feature>
<feature type="helix" evidence="11">
    <location>
        <begin position="6"/>
        <end position="16"/>
    </location>
</feature>
<feature type="strand" evidence="11">
    <location>
        <begin position="17"/>
        <end position="24"/>
    </location>
</feature>
<feature type="helix" evidence="11">
    <location>
        <begin position="28"/>
        <end position="36"/>
    </location>
</feature>
<feature type="strand" evidence="11">
    <location>
        <begin position="42"/>
        <end position="44"/>
    </location>
</feature>
<feature type="helix" evidence="11">
    <location>
        <begin position="46"/>
        <end position="51"/>
    </location>
</feature>
<feature type="turn" evidence="10">
    <location>
        <begin position="52"/>
        <end position="54"/>
    </location>
</feature>
<feature type="strand" evidence="11">
    <location>
        <begin position="58"/>
        <end position="60"/>
    </location>
</feature>
<feature type="helix" evidence="11">
    <location>
        <begin position="64"/>
        <end position="77"/>
    </location>
</feature>
<feature type="strand" evidence="11">
    <location>
        <begin position="82"/>
        <end position="85"/>
    </location>
</feature>
<feature type="strand" evidence="11">
    <location>
        <begin position="90"/>
        <end position="93"/>
    </location>
</feature>
<feature type="helix" evidence="11">
    <location>
        <begin position="94"/>
        <end position="107"/>
    </location>
</feature>
<feature type="strand" evidence="11">
    <location>
        <begin position="110"/>
        <end position="115"/>
    </location>
</feature>
<feature type="strand" evidence="11">
    <location>
        <begin position="126"/>
        <end position="128"/>
    </location>
</feature>
<feature type="helix" evidence="11">
    <location>
        <begin position="134"/>
        <end position="147"/>
    </location>
</feature>
<feature type="strand" evidence="11">
    <location>
        <begin position="153"/>
        <end position="159"/>
    </location>
</feature>
<feature type="helix" evidence="11">
    <location>
        <begin position="162"/>
        <end position="165"/>
    </location>
</feature>
<feature type="helix" evidence="11">
    <location>
        <begin position="167"/>
        <end position="179"/>
    </location>
</feature>
<feature type="strand" evidence="11">
    <location>
        <begin position="183"/>
        <end position="187"/>
    </location>
</feature>
<feature type="helix" evidence="11">
    <location>
        <begin position="193"/>
        <end position="203"/>
    </location>
</feature>
<feature type="strand" evidence="11">
    <location>
        <begin position="207"/>
        <end position="210"/>
    </location>
</feature>
<feature type="strand" evidence="11">
    <location>
        <begin position="213"/>
        <end position="217"/>
    </location>
</feature>
<feature type="helix" evidence="11">
    <location>
        <begin position="222"/>
        <end position="227"/>
    </location>
</feature>
<feature type="strand" evidence="11">
    <location>
        <begin position="231"/>
        <end position="237"/>
    </location>
</feature>
<feature type="helix" evidence="11">
    <location>
        <begin position="238"/>
        <end position="257"/>
    </location>
</feature>
<feature type="strand" evidence="11">
    <location>
        <begin position="258"/>
        <end position="260"/>
    </location>
</feature>
<feature type="helix" evidence="11">
    <location>
        <begin position="261"/>
        <end position="266"/>
    </location>
</feature>
<feature type="helix" evidence="11">
    <location>
        <begin position="270"/>
        <end position="276"/>
    </location>
</feature>
<feature type="helix" evidence="11">
    <location>
        <begin position="279"/>
        <end position="287"/>
    </location>
</feature>
<accession>P77541</accession>
<accession>Q2MC92</accession>
<dbReference type="EC" id="4.1.3.30" evidence="2 4"/>
<dbReference type="EMBL" id="U73857">
    <property type="protein sequence ID" value="AAB18055.1"/>
    <property type="molecule type" value="Genomic_DNA"/>
</dbReference>
<dbReference type="EMBL" id="U00096">
    <property type="protein sequence ID" value="AAC73434.1"/>
    <property type="molecule type" value="Genomic_DNA"/>
</dbReference>
<dbReference type="EMBL" id="AP009048">
    <property type="protein sequence ID" value="BAE76114.1"/>
    <property type="molecule type" value="Genomic_DNA"/>
</dbReference>
<dbReference type="PIR" id="C64760">
    <property type="entry name" value="C64760"/>
</dbReference>
<dbReference type="RefSeq" id="NP_414865.1">
    <property type="nucleotide sequence ID" value="NC_000913.3"/>
</dbReference>
<dbReference type="RefSeq" id="WP_000052206.1">
    <property type="nucleotide sequence ID" value="NZ_LN832404.1"/>
</dbReference>
<dbReference type="PDB" id="1MUM">
    <property type="method" value="X-ray"/>
    <property type="resolution" value="1.90 A"/>
    <property type="chains" value="A/B=2-296"/>
</dbReference>
<dbReference type="PDB" id="1OQF">
    <property type="method" value="X-ray"/>
    <property type="resolution" value="1.93 A"/>
    <property type="chains" value="A/B=2-296"/>
</dbReference>
<dbReference type="PDB" id="1XG3">
    <property type="method" value="X-ray"/>
    <property type="resolution" value="1.90 A"/>
    <property type="chains" value="A/B/C/D=2-296"/>
</dbReference>
<dbReference type="PDB" id="1XG4">
    <property type="method" value="X-ray"/>
    <property type="resolution" value="1.60 A"/>
    <property type="chains" value="A/B/C/D=2-296"/>
</dbReference>
<dbReference type="PDBsum" id="1MUM"/>
<dbReference type="PDBsum" id="1OQF"/>
<dbReference type="PDBsum" id="1XG3"/>
<dbReference type="PDBsum" id="1XG4"/>
<dbReference type="SMR" id="P77541"/>
<dbReference type="BioGRID" id="4259808">
    <property type="interactions" value="22"/>
</dbReference>
<dbReference type="FunCoup" id="P77541">
    <property type="interactions" value="376"/>
</dbReference>
<dbReference type="IntAct" id="P77541">
    <property type="interactions" value="12"/>
</dbReference>
<dbReference type="STRING" id="511145.b0331"/>
<dbReference type="DrugBank" id="DB01727">
    <property type="generic name" value="Isocitric Acid"/>
</dbReference>
<dbReference type="jPOST" id="P77541"/>
<dbReference type="PaxDb" id="511145-b0331"/>
<dbReference type="EnsemblBacteria" id="AAC73434">
    <property type="protein sequence ID" value="AAC73434"/>
    <property type="gene ID" value="b0331"/>
</dbReference>
<dbReference type="GeneID" id="944990"/>
<dbReference type="KEGG" id="ecj:JW0323"/>
<dbReference type="KEGG" id="eco:b0331"/>
<dbReference type="KEGG" id="ecoc:C3026_01625"/>
<dbReference type="KEGG" id="ecoc:C3026_24795"/>
<dbReference type="PATRIC" id="fig|1411691.4.peg.1945"/>
<dbReference type="EchoBASE" id="EB3370"/>
<dbReference type="eggNOG" id="COG2513">
    <property type="taxonomic scope" value="Bacteria"/>
</dbReference>
<dbReference type="HOGENOM" id="CLU_027389_3_2_6"/>
<dbReference type="InParanoid" id="P77541"/>
<dbReference type="OMA" id="DRIGYHA"/>
<dbReference type="OrthoDB" id="9771433at2"/>
<dbReference type="PhylomeDB" id="P77541"/>
<dbReference type="BioCyc" id="EcoCyc:G6196-MONOMER"/>
<dbReference type="BioCyc" id="MetaCyc:G6196-MONOMER"/>
<dbReference type="BRENDA" id="4.1.3.30">
    <property type="organism ID" value="2026"/>
</dbReference>
<dbReference type="SABIO-RK" id="P77541"/>
<dbReference type="UniPathway" id="UPA00946"/>
<dbReference type="EvolutionaryTrace" id="P77541"/>
<dbReference type="PRO" id="PR:P77541"/>
<dbReference type="Proteomes" id="UP000000625">
    <property type="component" value="Chromosome"/>
</dbReference>
<dbReference type="GO" id="GO:0000287">
    <property type="term" value="F:magnesium ion binding"/>
    <property type="evidence" value="ECO:0000314"/>
    <property type="project" value="UniProtKB"/>
</dbReference>
<dbReference type="GO" id="GO:0046421">
    <property type="term" value="F:methylisocitrate lyase activity"/>
    <property type="evidence" value="ECO:0000314"/>
    <property type="project" value="UniProtKB"/>
</dbReference>
<dbReference type="GO" id="GO:0019629">
    <property type="term" value="P:propionate catabolic process, 2-methylcitrate cycle"/>
    <property type="evidence" value="ECO:0000314"/>
    <property type="project" value="EcoCyc"/>
</dbReference>
<dbReference type="CDD" id="cd00377">
    <property type="entry name" value="ICL_PEPM"/>
    <property type="match status" value="1"/>
</dbReference>
<dbReference type="FunFam" id="3.20.20.60:FF:000009">
    <property type="entry name" value="2-methylisocitrate lyase"/>
    <property type="match status" value="1"/>
</dbReference>
<dbReference type="Gene3D" id="3.20.20.60">
    <property type="entry name" value="Phosphoenolpyruvate-binding domains"/>
    <property type="match status" value="1"/>
</dbReference>
<dbReference type="HAMAP" id="MF_01939">
    <property type="entry name" value="PrpB"/>
    <property type="match status" value="1"/>
</dbReference>
<dbReference type="InterPro" id="IPR039556">
    <property type="entry name" value="ICL/PEPM"/>
</dbReference>
<dbReference type="InterPro" id="IPR018523">
    <property type="entry name" value="Isocitrate_lyase_ph_CS"/>
</dbReference>
<dbReference type="InterPro" id="IPR012695">
    <property type="entry name" value="PrpB"/>
</dbReference>
<dbReference type="InterPro" id="IPR015813">
    <property type="entry name" value="Pyrv/PenolPyrv_kinase-like_dom"/>
</dbReference>
<dbReference type="InterPro" id="IPR040442">
    <property type="entry name" value="Pyrv_kinase-like_dom_sf"/>
</dbReference>
<dbReference type="NCBIfam" id="NF008455">
    <property type="entry name" value="PRK11320.1"/>
    <property type="match status" value="1"/>
</dbReference>
<dbReference type="NCBIfam" id="TIGR02317">
    <property type="entry name" value="prpB"/>
    <property type="match status" value="1"/>
</dbReference>
<dbReference type="PANTHER" id="PTHR42905:SF5">
    <property type="entry name" value="CARBOXYVINYL-CARBOXYPHOSPHONATE PHOSPHORYLMUTASE, CHLOROPLASTIC"/>
    <property type="match status" value="1"/>
</dbReference>
<dbReference type="PANTHER" id="PTHR42905">
    <property type="entry name" value="PHOSPHOENOLPYRUVATE CARBOXYLASE"/>
    <property type="match status" value="1"/>
</dbReference>
<dbReference type="Pfam" id="PF13714">
    <property type="entry name" value="PEP_mutase"/>
    <property type="match status" value="1"/>
</dbReference>
<dbReference type="SUPFAM" id="SSF51621">
    <property type="entry name" value="Phosphoenolpyruvate/pyruvate domain"/>
    <property type="match status" value="1"/>
</dbReference>
<dbReference type="PROSITE" id="PS00161">
    <property type="entry name" value="ISOCITRATE_LYASE"/>
    <property type="match status" value="1"/>
</dbReference>
<name>PRPB_ECOLI</name>
<reference key="1">
    <citation type="submission" date="1997-01" db="EMBL/GenBank/DDBJ databases">
        <title>Sequence of minutes 4-25 of Escherichia coli.</title>
        <authorList>
            <person name="Chung E."/>
            <person name="Allen E."/>
            <person name="Araujo R."/>
            <person name="Aparicio A.M."/>
            <person name="Davis K."/>
            <person name="Duncan M."/>
            <person name="Federspiel N."/>
            <person name="Hyman R."/>
            <person name="Kalman S."/>
            <person name="Komp C."/>
            <person name="Kurdi O."/>
            <person name="Lew H."/>
            <person name="Lin D."/>
            <person name="Namath A."/>
            <person name="Oefner P."/>
            <person name="Roberts D."/>
            <person name="Schramm S."/>
            <person name="Davis R.W."/>
        </authorList>
    </citation>
    <scope>NUCLEOTIDE SEQUENCE [LARGE SCALE GENOMIC DNA]</scope>
    <source>
        <strain>K12 / MG1655 / ATCC 47076</strain>
    </source>
</reference>
<reference key="2">
    <citation type="journal article" date="1997" name="Science">
        <title>The complete genome sequence of Escherichia coli K-12.</title>
        <authorList>
            <person name="Blattner F.R."/>
            <person name="Plunkett G. III"/>
            <person name="Bloch C.A."/>
            <person name="Perna N.T."/>
            <person name="Burland V."/>
            <person name="Riley M."/>
            <person name="Collado-Vides J."/>
            <person name="Glasner J.D."/>
            <person name="Rode C.K."/>
            <person name="Mayhew G.F."/>
            <person name="Gregor J."/>
            <person name="Davis N.W."/>
            <person name="Kirkpatrick H.A."/>
            <person name="Goeden M.A."/>
            <person name="Rose D.J."/>
            <person name="Mau B."/>
            <person name="Shao Y."/>
        </authorList>
    </citation>
    <scope>NUCLEOTIDE SEQUENCE [LARGE SCALE GENOMIC DNA]</scope>
    <source>
        <strain>K12 / MG1655 / ATCC 47076</strain>
    </source>
</reference>
<reference key="3">
    <citation type="journal article" date="2006" name="Mol. Syst. Biol.">
        <title>Highly accurate genome sequences of Escherichia coli K-12 strains MG1655 and W3110.</title>
        <authorList>
            <person name="Hayashi K."/>
            <person name="Morooka N."/>
            <person name="Yamamoto Y."/>
            <person name="Fujita K."/>
            <person name="Isono K."/>
            <person name="Choi S."/>
            <person name="Ohtsubo E."/>
            <person name="Baba T."/>
            <person name="Wanner B.L."/>
            <person name="Mori H."/>
            <person name="Horiuchi T."/>
        </authorList>
    </citation>
    <scope>NUCLEOTIDE SEQUENCE [LARGE SCALE GENOMIC DNA]</scope>
    <source>
        <strain>K12 / W3110 / ATCC 27325 / DSM 5911</strain>
    </source>
</reference>
<reference key="4">
    <citation type="journal article" date="1997" name="Arch. Microbiol.">
        <title>Propionate oxidation in Escherichia coli: evidence for operation of a methylcitrate cycle in bacteria.</title>
        <authorList>
            <person name="Textor S."/>
            <person name="Wendisch V.F."/>
            <person name="de Graaf A.A."/>
            <person name="Mueller U."/>
            <person name="Linder M.I."/>
            <person name="Linder D."/>
            <person name="Buckel W."/>
        </authorList>
    </citation>
    <scope>PROTEIN SEQUENCE OF 2-12</scope>
    <scope>PATHWAY</scope>
</reference>
<reference key="5">
    <citation type="journal article" date="2001" name="Eur. J. Biochem.">
        <title>2-Methylisocitrate lyases from the bacterium Escherichia coli and the filamentous fungus Aspergillus nidulans: characterization and comparison of both enzymes.</title>
        <authorList>
            <person name="Brock M."/>
            <person name="Darley D."/>
            <person name="Textor S."/>
            <person name="Buckel W."/>
        </authorList>
    </citation>
    <scope>FUNCTION</scope>
    <scope>CATALYTIC ACTIVITY</scope>
    <scope>BIOPHYSICOCHEMICAL PROPERTIES</scope>
    <scope>COFACTOR</scope>
</reference>
<reference key="6">
    <citation type="journal article" date="2003" name="J. Mol. Biol.">
        <title>Crystal structure of 2-methylisocitrate lyase (PrpB) from Escherichia coli and modelling of its ligand bound active centre.</title>
        <authorList>
            <person name="Grimm C."/>
            <person name="Evers A."/>
            <person name="Brock M."/>
            <person name="Maerker C."/>
            <person name="Klebe G."/>
            <person name="Buckel W."/>
            <person name="Reuter K."/>
        </authorList>
    </citation>
    <scope>X-RAY CRYSTALLOGRAPHY (1.90 ANGSTROMS) OF 2-295 IN COMPLEX WITH MAGNESIUM</scope>
    <scope>COFACTOR</scope>
    <scope>SUBUNIT</scope>
</reference>
<reference key="7">
    <citation type="journal article" date="2005" name="Biochemistry">
        <title>Crystal structures of 2-methylisocitrate lyase in complex with product and with isocitrate inhibitor provide insight into lyase substrate specificity, catalysis and evolution.</title>
        <authorList>
            <person name="Liu S."/>
            <person name="Lu Z."/>
            <person name="Han Y."/>
            <person name="Melamud E."/>
            <person name="Dunaway-Mariano D."/>
            <person name="Herzberg O."/>
        </authorList>
    </citation>
    <scope>X-RAY CRYSTALLOGRAPHY (1.60 ANGSTROMS) OF 2-295 IN COMPLEX WITH SUBSTRATE AND MAGNESIUM</scope>
    <scope>FUNCTION</scope>
    <scope>CATALYTIC ACTIVITY</scope>
    <scope>BIOPHYSICOCHEMICAL PROPERTIES</scope>
    <scope>MUTAGENESIS OF CYS-123</scope>
    <scope>COFACTOR</scope>
    <scope>SUBUNIT</scope>
    <scope>SUBSTRATE SPECIFICITY</scope>
    <scope>REACTION MECHANISM</scope>
</reference>
<proteinExistence type="evidence at protein level"/>
<keyword id="KW-0002">3D-structure</keyword>
<keyword id="KW-0903">Direct protein sequencing</keyword>
<keyword id="KW-0456">Lyase</keyword>
<keyword id="KW-0460">Magnesium</keyword>
<keyword id="KW-0479">Metal-binding</keyword>
<keyword id="KW-1185">Reference proteome</keyword>
<organism>
    <name type="scientific">Escherichia coli (strain K12)</name>
    <dbReference type="NCBI Taxonomy" id="83333"/>
    <lineage>
        <taxon>Bacteria</taxon>
        <taxon>Pseudomonadati</taxon>
        <taxon>Pseudomonadota</taxon>
        <taxon>Gammaproteobacteria</taxon>
        <taxon>Enterobacterales</taxon>
        <taxon>Enterobacteriaceae</taxon>
        <taxon>Escherichia</taxon>
    </lineage>
</organism>